<feature type="chain" id="PRO_1000118111" description="3-methyl-2-oxobutanoate hydroxymethyltransferase">
    <location>
        <begin position="1"/>
        <end position="269"/>
    </location>
</feature>
<feature type="active site" description="Proton acceptor" evidence="1">
    <location>
        <position position="179"/>
    </location>
</feature>
<feature type="binding site" evidence="1">
    <location>
        <begin position="43"/>
        <end position="44"/>
    </location>
    <ligand>
        <name>3-methyl-2-oxobutanoate</name>
        <dbReference type="ChEBI" id="CHEBI:11851"/>
    </ligand>
</feature>
<feature type="binding site" evidence="1">
    <location>
        <position position="43"/>
    </location>
    <ligand>
        <name>Mg(2+)</name>
        <dbReference type="ChEBI" id="CHEBI:18420"/>
    </ligand>
</feature>
<feature type="binding site" evidence="1">
    <location>
        <position position="82"/>
    </location>
    <ligand>
        <name>3-methyl-2-oxobutanoate</name>
        <dbReference type="ChEBI" id="CHEBI:11851"/>
    </ligand>
</feature>
<feature type="binding site" evidence="1">
    <location>
        <position position="82"/>
    </location>
    <ligand>
        <name>Mg(2+)</name>
        <dbReference type="ChEBI" id="CHEBI:18420"/>
    </ligand>
</feature>
<feature type="binding site" evidence="1">
    <location>
        <position position="110"/>
    </location>
    <ligand>
        <name>3-methyl-2-oxobutanoate</name>
        <dbReference type="ChEBI" id="CHEBI:11851"/>
    </ligand>
</feature>
<feature type="binding site" evidence="1">
    <location>
        <position position="112"/>
    </location>
    <ligand>
        <name>Mg(2+)</name>
        <dbReference type="ChEBI" id="CHEBI:18420"/>
    </ligand>
</feature>
<organism>
    <name type="scientific">Acinetobacter baumannii (strain AB307-0294)</name>
    <dbReference type="NCBI Taxonomy" id="557600"/>
    <lineage>
        <taxon>Bacteria</taxon>
        <taxon>Pseudomonadati</taxon>
        <taxon>Pseudomonadota</taxon>
        <taxon>Gammaproteobacteria</taxon>
        <taxon>Moraxellales</taxon>
        <taxon>Moraxellaceae</taxon>
        <taxon>Acinetobacter</taxon>
        <taxon>Acinetobacter calcoaceticus/baumannii complex</taxon>
    </lineage>
</organism>
<comment type="function">
    <text evidence="1">Catalyzes the reversible reaction in which hydroxymethyl group from 5,10-methylenetetrahydrofolate is transferred onto alpha-ketoisovalerate to form ketopantoate.</text>
</comment>
<comment type="catalytic activity">
    <reaction evidence="1">
        <text>3-methyl-2-oxobutanoate + (6R)-5,10-methylene-5,6,7,8-tetrahydrofolate + H2O = 2-dehydropantoate + (6S)-5,6,7,8-tetrahydrofolate</text>
        <dbReference type="Rhea" id="RHEA:11824"/>
        <dbReference type="ChEBI" id="CHEBI:11561"/>
        <dbReference type="ChEBI" id="CHEBI:11851"/>
        <dbReference type="ChEBI" id="CHEBI:15377"/>
        <dbReference type="ChEBI" id="CHEBI:15636"/>
        <dbReference type="ChEBI" id="CHEBI:57453"/>
        <dbReference type="EC" id="2.1.2.11"/>
    </reaction>
</comment>
<comment type="cofactor">
    <cofactor evidence="1">
        <name>Mg(2+)</name>
        <dbReference type="ChEBI" id="CHEBI:18420"/>
    </cofactor>
    <text evidence="1">Binds 1 Mg(2+) ion per subunit.</text>
</comment>
<comment type="pathway">
    <text evidence="1">Cofactor biosynthesis; (R)-pantothenate biosynthesis; (R)-pantoate from 3-methyl-2-oxobutanoate: step 1/2.</text>
</comment>
<comment type="subunit">
    <text evidence="1">Homodecamer; pentamer of dimers.</text>
</comment>
<comment type="subcellular location">
    <subcellularLocation>
        <location evidence="1">Cytoplasm</location>
    </subcellularLocation>
</comment>
<comment type="similarity">
    <text evidence="1">Belongs to the PanB family.</text>
</comment>
<name>PANB_ACIB3</name>
<protein>
    <recommendedName>
        <fullName evidence="1">3-methyl-2-oxobutanoate hydroxymethyltransferase</fullName>
        <ecNumber evidence="1">2.1.2.11</ecNumber>
    </recommendedName>
    <alternativeName>
        <fullName evidence="1">Ketopantoate hydroxymethyltransferase</fullName>
        <shortName evidence="1">KPHMT</shortName>
    </alternativeName>
</protein>
<evidence type="ECO:0000255" key="1">
    <source>
        <dbReference type="HAMAP-Rule" id="MF_00156"/>
    </source>
</evidence>
<reference key="1">
    <citation type="journal article" date="2008" name="J. Bacteriol.">
        <title>Comparative genome sequence analysis of multidrug-resistant Acinetobacter baumannii.</title>
        <authorList>
            <person name="Adams M.D."/>
            <person name="Goglin K."/>
            <person name="Molyneaux N."/>
            <person name="Hujer K.M."/>
            <person name="Lavender H."/>
            <person name="Jamison J.J."/>
            <person name="MacDonald I.J."/>
            <person name="Martin K.M."/>
            <person name="Russo T."/>
            <person name="Campagnari A.A."/>
            <person name="Hujer A.M."/>
            <person name="Bonomo R.A."/>
            <person name="Gill S.R."/>
        </authorList>
    </citation>
    <scope>NUCLEOTIDE SEQUENCE [LARGE SCALE GENOMIC DNA]</scope>
    <source>
        <strain>AB307-0294</strain>
    </source>
</reference>
<gene>
    <name evidence="1" type="primary">panB</name>
    <name type="ordered locus">ABBFA_002975</name>
</gene>
<keyword id="KW-0963">Cytoplasm</keyword>
<keyword id="KW-0460">Magnesium</keyword>
<keyword id="KW-0479">Metal-binding</keyword>
<keyword id="KW-0566">Pantothenate biosynthesis</keyword>
<keyword id="KW-0808">Transferase</keyword>
<dbReference type="EC" id="2.1.2.11" evidence="1"/>
<dbReference type="EMBL" id="CP001172">
    <property type="protein sequence ID" value="ACJ59132.1"/>
    <property type="molecule type" value="Genomic_DNA"/>
</dbReference>
<dbReference type="RefSeq" id="WP_000624763.1">
    <property type="nucleotide sequence ID" value="NZ_CP001172.1"/>
</dbReference>
<dbReference type="SMR" id="B7H011"/>
<dbReference type="GeneID" id="92892564"/>
<dbReference type="HOGENOM" id="CLU_036645_1_0_6"/>
<dbReference type="UniPathway" id="UPA00028">
    <property type="reaction ID" value="UER00003"/>
</dbReference>
<dbReference type="Proteomes" id="UP000006924">
    <property type="component" value="Chromosome"/>
</dbReference>
<dbReference type="GO" id="GO:0005737">
    <property type="term" value="C:cytoplasm"/>
    <property type="evidence" value="ECO:0007669"/>
    <property type="project" value="UniProtKB-SubCell"/>
</dbReference>
<dbReference type="GO" id="GO:0003864">
    <property type="term" value="F:3-methyl-2-oxobutanoate hydroxymethyltransferase activity"/>
    <property type="evidence" value="ECO:0007669"/>
    <property type="project" value="UniProtKB-UniRule"/>
</dbReference>
<dbReference type="GO" id="GO:0000287">
    <property type="term" value="F:magnesium ion binding"/>
    <property type="evidence" value="ECO:0007669"/>
    <property type="project" value="TreeGrafter"/>
</dbReference>
<dbReference type="GO" id="GO:0015940">
    <property type="term" value="P:pantothenate biosynthetic process"/>
    <property type="evidence" value="ECO:0007669"/>
    <property type="project" value="UniProtKB-UniRule"/>
</dbReference>
<dbReference type="CDD" id="cd06557">
    <property type="entry name" value="KPHMT-like"/>
    <property type="match status" value="1"/>
</dbReference>
<dbReference type="FunFam" id="3.20.20.60:FF:000003">
    <property type="entry name" value="3-methyl-2-oxobutanoate hydroxymethyltransferase"/>
    <property type="match status" value="1"/>
</dbReference>
<dbReference type="Gene3D" id="3.20.20.60">
    <property type="entry name" value="Phosphoenolpyruvate-binding domains"/>
    <property type="match status" value="1"/>
</dbReference>
<dbReference type="HAMAP" id="MF_00156">
    <property type="entry name" value="PanB"/>
    <property type="match status" value="1"/>
</dbReference>
<dbReference type="InterPro" id="IPR003700">
    <property type="entry name" value="Pantoate_hydroxy_MeTrfase"/>
</dbReference>
<dbReference type="InterPro" id="IPR015813">
    <property type="entry name" value="Pyrv/PenolPyrv_kinase-like_dom"/>
</dbReference>
<dbReference type="InterPro" id="IPR040442">
    <property type="entry name" value="Pyrv_kinase-like_dom_sf"/>
</dbReference>
<dbReference type="NCBIfam" id="TIGR00222">
    <property type="entry name" value="panB"/>
    <property type="match status" value="1"/>
</dbReference>
<dbReference type="NCBIfam" id="NF001452">
    <property type="entry name" value="PRK00311.1"/>
    <property type="match status" value="1"/>
</dbReference>
<dbReference type="PANTHER" id="PTHR20881">
    <property type="entry name" value="3-METHYL-2-OXOBUTANOATE HYDROXYMETHYLTRANSFERASE"/>
    <property type="match status" value="1"/>
</dbReference>
<dbReference type="PANTHER" id="PTHR20881:SF0">
    <property type="entry name" value="3-METHYL-2-OXOBUTANOATE HYDROXYMETHYLTRANSFERASE"/>
    <property type="match status" value="1"/>
</dbReference>
<dbReference type="Pfam" id="PF02548">
    <property type="entry name" value="Pantoate_transf"/>
    <property type="match status" value="1"/>
</dbReference>
<dbReference type="PIRSF" id="PIRSF000388">
    <property type="entry name" value="Pantoate_hydroxy_MeTrfase"/>
    <property type="match status" value="1"/>
</dbReference>
<dbReference type="SUPFAM" id="SSF51621">
    <property type="entry name" value="Phosphoenolpyruvate/pyruvate domain"/>
    <property type="match status" value="1"/>
</dbReference>
<sequence>MISLSDLRKFKAEGRKFSCLTCYDASMAKAMELAEIDTILIGDSLGMAIQGRDSTLPVTVEDMAYHTAAVRRGNQHALIMTDLPFMSYATLNDALQNAKTVMQAGAQMIKIEGGAWLSETVQVLTRNGVPVCVHLGLTPQSVHVFGGYKLQARTREAADQLIADCTAVVEAGAAVLLLECVPAQLGQEIAELFPNTPVIGIGAGNATDGQVLVVQDMLGLTFGRVARFVRNFMKEQSGETAILDAFKAFHAAVQDQSFPAKEHTFQVEL</sequence>
<proteinExistence type="inferred from homology"/>
<accession>B7H011</accession>